<reference key="1">
    <citation type="journal article" date="1998" name="DNA Res.">
        <title>Sequence analysis of the Bacillus subtilis 168 chromosome region between the sspC and odhA loci (184 degrees-180 degrees).</title>
        <authorList>
            <person name="Ghim S.-Y."/>
            <person name="Choi S.-K."/>
            <person name="Shin B.-S."/>
            <person name="Jeong Y.-M."/>
            <person name="Sorokin A."/>
            <person name="Ehrlich S.D."/>
            <person name="Park S.-H."/>
        </authorList>
    </citation>
    <scope>NUCLEOTIDE SEQUENCE [GENOMIC DNA]</scope>
    <source>
        <strain>168</strain>
    </source>
</reference>
<reference key="2">
    <citation type="journal article" date="1997" name="Nature">
        <title>The complete genome sequence of the Gram-positive bacterium Bacillus subtilis.</title>
        <authorList>
            <person name="Kunst F."/>
            <person name="Ogasawara N."/>
            <person name="Moszer I."/>
            <person name="Albertini A.M."/>
            <person name="Alloni G."/>
            <person name="Azevedo V."/>
            <person name="Bertero M.G."/>
            <person name="Bessieres P."/>
            <person name="Bolotin A."/>
            <person name="Borchert S."/>
            <person name="Borriss R."/>
            <person name="Boursier L."/>
            <person name="Brans A."/>
            <person name="Braun M."/>
            <person name="Brignell S.C."/>
            <person name="Bron S."/>
            <person name="Brouillet S."/>
            <person name="Bruschi C.V."/>
            <person name="Caldwell B."/>
            <person name="Capuano V."/>
            <person name="Carter N.M."/>
            <person name="Choi S.-K."/>
            <person name="Codani J.-J."/>
            <person name="Connerton I.F."/>
            <person name="Cummings N.J."/>
            <person name="Daniel R.A."/>
            <person name="Denizot F."/>
            <person name="Devine K.M."/>
            <person name="Duesterhoeft A."/>
            <person name="Ehrlich S.D."/>
            <person name="Emmerson P.T."/>
            <person name="Entian K.-D."/>
            <person name="Errington J."/>
            <person name="Fabret C."/>
            <person name="Ferrari E."/>
            <person name="Foulger D."/>
            <person name="Fritz C."/>
            <person name="Fujita M."/>
            <person name="Fujita Y."/>
            <person name="Fuma S."/>
            <person name="Galizzi A."/>
            <person name="Galleron N."/>
            <person name="Ghim S.-Y."/>
            <person name="Glaser P."/>
            <person name="Goffeau A."/>
            <person name="Golightly E.J."/>
            <person name="Grandi G."/>
            <person name="Guiseppi G."/>
            <person name="Guy B.J."/>
            <person name="Haga K."/>
            <person name="Haiech J."/>
            <person name="Harwood C.R."/>
            <person name="Henaut A."/>
            <person name="Hilbert H."/>
            <person name="Holsappel S."/>
            <person name="Hosono S."/>
            <person name="Hullo M.-F."/>
            <person name="Itaya M."/>
            <person name="Jones L.-M."/>
            <person name="Joris B."/>
            <person name="Karamata D."/>
            <person name="Kasahara Y."/>
            <person name="Klaerr-Blanchard M."/>
            <person name="Klein C."/>
            <person name="Kobayashi Y."/>
            <person name="Koetter P."/>
            <person name="Koningstein G."/>
            <person name="Krogh S."/>
            <person name="Kumano M."/>
            <person name="Kurita K."/>
            <person name="Lapidus A."/>
            <person name="Lardinois S."/>
            <person name="Lauber J."/>
            <person name="Lazarevic V."/>
            <person name="Lee S.-M."/>
            <person name="Levine A."/>
            <person name="Liu H."/>
            <person name="Masuda S."/>
            <person name="Mauel C."/>
            <person name="Medigue C."/>
            <person name="Medina N."/>
            <person name="Mellado R.P."/>
            <person name="Mizuno M."/>
            <person name="Moestl D."/>
            <person name="Nakai S."/>
            <person name="Noback M."/>
            <person name="Noone D."/>
            <person name="O'Reilly M."/>
            <person name="Ogawa K."/>
            <person name="Ogiwara A."/>
            <person name="Oudega B."/>
            <person name="Park S.-H."/>
            <person name="Parro V."/>
            <person name="Pohl T.M."/>
            <person name="Portetelle D."/>
            <person name="Porwollik S."/>
            <person name="Prescott A.M."/>
            <person name="Presecan E."/>
            <person name="Pujic P."/>
            <person name="Purnelle B."/>
            <person name="Rapoport G."/>
            <person name="Rey M."/>
            <person name="Reynolds S."/>
            <person name="Rieger M."/>
            <person name="Rivolta C."/>
            <person name="Rocha E."/>
            <person name="Roche B."/>
            <person name="Rose M."/>
            <person name="Sadaie Y."/>
            <person name="Sato T."/>
            <person name="Scanlan E."/>
            <person name="Schleich S."/>
            <person name="Schroeter R."/>
            <person name="Scoffone F."/>
            <person name="Sekiguchi J."/>
            <person name="Sekowska A."/>
            <person name="Seror S.J."/>
            <person name="Serror P."/>
            <person name="Shin B.-S."/>
            <person name="Soldo B."/>
            <person name="Sorokin A."/>
            <person name="Tacconi E."/>
            <person name="Takagi T."/>
            <person name="Takahashi H."/>
            <person name="Takemaru K."/>
            <person name="Takeuchi M."/>
            <person name="Tamakoshi A."/>
            <person name="Tanaka T."/>
            <person name="Terpstra P."/>
            <person name="Tognoni A."/>
            <person name="Tosato V."/>
            <person name="Uchiyama S."/>
            <person name="Vandenbol M."/>
            <person name="Vannier F."/>
            <person name="Vassarotti A."/>
            <person name="Viari A."/>
            <person name="Wambutt R."/>
            <person name="Wedler E."/>
            <person name="Wedler H."/>
            <person name="Weitzenegger T."/>
            <person name="Winters P."/>
            <person name="Wipat A."/>
            <person name="Yamamoto H."/>
            <person name="Yamane K."/>
            <person name="Yasumoto K."/>
            <person name="Yata K."/>
            <person name="Yoshida K."/>
            <person name="Yoshikawa H.-F."/>
            <person name="Zumstein E."/>
            <person name="Yoshikawa H."/>
            <person name="Danchin A."/>
        </authorList>
    </citation>
    <scope>NUCLEOTIDE SEQUENCE [LARGE SCALE GENOMIC DNA]</scope>
    <source>
        <strain>168</strain>
    </source>
</reference>
<name>YOTM_BACSU</name>
<protein>
    <recommendedName>
        <fullName>SPbeta prophage-derived uncharacterized protein YotM</fullName>
    </recommendedName>
</protein>
<feature type="chain" id="PRO_0000359952" description="SPbeta prophage-derived uncharacterized protein YotM">
    <location>
        <begin position="1"/>
        <end position="195"/>
    </location>
</feature>
<gene>
    <name type="primary">yotM</name>
    <name type="synonym">yodV</name>
    <name type="synonym">yokI</name>
    <name type="ordered locus">BSU19830</name>
</gene>
<organism>
    <name type="scientific">Bacillus subtilis (strain 168)</name>
    <dbReference type="NCBI Taxonomy" id="224308"/>
    <lineage>
        <taxon>Bacteria</taxon>
        <taxon>Bacillati</taxon>
        <taxon>Bacillota</taxon>
        <taxon>Bacilli</taxon>
        <taxon>Bacillales</taxon>
        <taxon>Bacillaceae</taxon>
        <taxon>Bacillus</taxon>
    </lineage>
</organism>
<keyword id="KW-1185">Reference proteome</keyword>
<sequence length="195" mass="22811">MGANNQGKVFEANIEKSAADQKLFFYRIKDVNPMFLKRGAAVSKNKYDCFLFFKGYLFPFELKSTKSKSISFSEKIIKPQQIKYLREATQYPNIIPGFLFQFREPENKVYFVHINDFLTYKNIAEKQLKHTYKNKVNKASIPIAICEEIGTEVRSMKKKVNYTYYLNKLCGELIKKEQSRDKPLHTYNTPVKTGV</sequence>
<proteinExistence type="predicted"/>
<accession>O34820</accession>
<accession>Q796A9</accession>
<dbReference type="EMBL" id="AF015775">
    <property type="protein sequence ID" value="AAB72079.1"/>
    <property type="molecule type" value="Genomic_DNA"/>
</dbReference>
<dbReference type="EMBL" id="AF006665">
    <property type="protein sequence ID" value="AAB81145.1"/>
    <property type="molecule type" value="Genomic_DNA"/>
</dbReference>
<dbReference type="EMBL" id="AL009126">
    <property type="protein sequence ID" value="CAB13874.1"/>
    <property type="molecule type" value="Genomic_DNA"/>
</dbReference>
<dbReference type="RefSeq" id="NP_389864.1">
    <property type="nucleotide sequence ID" value="NC_000964.3"/>
</dbReference>
<dbReference type="RefSeq" id="WP_004399411.1">
    <property type="nucleotide sequence ID" value="NZ_OZ025638.1"/>
</dbReference>
<dbReference type="SMR" id="O34820"/>
<dbReference type="FunCoup" id="O34820">
    <property type="interactions" value="114"/>
</dbReference>
<dbReference type="STRING" id="224308.BSU19830"/>
<dbReference type="PaxDb" id="224308-BSU19830"/>
<dbReference type="EnsemblBacteria" id="CAB13874">
    <property type="protein sequence ID" value="CAB13874"/>
    <property type="gene ID" value="BSU_19830"/>
</dbReference>
<dbReference type="GeneID" id="940081"/>
<dbReference type="KEGG" id="bsu:BSU19830"/>
<dbReference type="PATRIC" id="fig|224308.179.peg.2172"/>
<dbReference type="eggNOG" id="COG3331">
    <property type="taxonomic scope" value="Bacteria"/>
</dbReference>
<dbReference type="InParanoid" id="O34820"/>
<dbReference type="OrthoDB" id="2475790at2"/>
<dbReference type="BioCyc" id="BSUB:BSU19830-MONOMER"/>
<dbReference type="Proteomes" id="UP000001570">
    <property type="component" value="Chromosome"/>
</dbReference>
<dbReference type="GO" id="GO:0003676">
    <property type="term" value="F:nucleic acid binding"/>
    <property type="evidence" value="ECO:0007669"/>
    <property type="project" value="InterPro"/>
</dbReference>
<dbReference type="Gene3D" id="3.40.1350.10">
    <property type="match status" value="1"/>
</dbReference>
<dbReference type="InterPro" id="IPR011335">
    <property type="entry name" value="Restrct_endonuc-II-like"/>
</dbReference>
<dbReference type="InterPro" id="IPR011856">
    <property type="entry name" value="tRNA_endonuc-like_dom_sf"/>
</dbReference>
<dbReference type="SUPFAM" id="SSF52980">
    <property type="entry name" value="Restriction endonuclease-like"/>
    <property type="match status" value="1"/>
</dbReference>